<accession>P9WET0</accession>
<name>PREU9_PREIS</name>
<proteinExistence type="evidence at protein level"/>
<reference key="1">
    <citation type="journal article" date="2022" name="Front. Microbiol.">
        <title>Cloning and functional characterization of the polyketide synthases based on genome mining of Preussia isomera XL-1326.</title>
        <authorList>
            <person name="Liu Q."/>
            <person name="Zhang D."/>
            <person name="Xu Y."/>
            <person name="Gao S."/>
            <person name="Gong Y."/>
            <person name="Cai X."/>
            <person name="Yao M."/>
            <person name="Yang X."/>
        </authorList>
    </citation>
    <scope>NUCLEOTIDE SEQUENCE [MRNA]</scope>
    <scope>FUNCTION</scope>
    <scope>DOMAIN</scope>
    <scope>CATALYTIC ACTIVITY</scope>
    <source>
        <strain>XL-1326</strain>
    </source>
</reference>
<feature type="chain" id="PRO_0000456459" description="Polyketide synthase-like protein Preu9">
    <location>
        <begin position="1"/>
        <end position="2144"/>
    </location>
</feature>
<feature type="domain" description="Ketosynthase family 3 (KS3)" evidence="2 6">
    <location>
        <begin position="1"/>
        <end position="250"/>
    </location>
</feature>
<feature type="domain" description="PKS/mFAS DH" evidence="3">
    <location>
        <begin position="827"/>
        <end position="1141"/>
    </location>
</feature>
<feature type="region of interest" description="Disordered" evidence="4">
    <location>
        <begin position="276"/>
        <end position="325"/>
    </location>
</feature>
<feature type="region of interest" description="Malonyl-CoA:ACP transacylase (MAT)" evidence="1 6">
    <location>
        <begin position="435"/>
        <end position="738"/>
    </location>
</feature>
<feature type="region of interest" description="Dehydratase (DH) domain" evidence="1 6">
    <location>
        <begin position="827"/>
        <end position="1137"/>
    </location>
</feature>
<feature type="region of interest" description="N-terminal hotdog fold" evidence="3">
    <location>
        <begin position="827"/>
        <end position="965"/>
    </location>
</feature>
<feature type="region of interest" description="C-terminal hotdog fold" evidence="3">
    <location>
        <begin position="979"/>
        <end position="1141"/>
    </location>
</feature>
<feature type="region of interest" description="Methyltransferase (MT) domain" evidence="1 6">
    <location>
        <begin position="1305"/>
        <end position="1494"/>
    </location>
</feature>
<feature type="region of interest" description="Enoyl reductase (ER) domain" evidence="1 6">
    <location>
        <begin position="1731"/>
        <end position="2042"/>
    </location>
</feature>
<feature type="compositionally biased region" description="Basic and acidic residues" evidence="4">
    <location>
        <begin position="293"/>
        <end position="305"/>
    </location>
</feature>
<feature type="active site" description="Proton acceptor; for dehydratase activity" evidence="3">
    <location>
        <position position="859"/>
    </location>
</feature>
<feature type="active site" description="Proton donor; for dehydratase activity" evidence="3">
    <location>
        <position position="1050"/>
    </location>
</feature>
<gene>
    <name evidence="5" type="primary">Preu9</name>
</gene>
<dbReference type="EMBL" id="OK493443">
    <property type="protein sequence ID" value="UNY67721.1"/>
    <property type="molecule type" value="mRNA"/>
</dbReference>
<dbReference type="SMR" id="P9WET0"/>
<dbReference type="GO" id="GO:0004312">
    <property type="term" value="F:fatty acid synthase activity"/>
    <property type="evidence" value="ECO:0007669"/>
    <property type="project" value="TreeGrafter"/>
</dbReference>
<dbReference type="GO" id="GO:0016491">
    <property type="term" value="F:oxidoreductase activity"/>
    <property type="evidence" value="ECO:0007669"/>
    <property type="project" value="InterPro"/>
</dbReference>
<dbReference type="GO" id="GO:0006633">
    <property type="term" value="P:fatty acid biosynthetic process"/>
    <property type="evidence" value="ECO:0007669"/>
    <property type="project" value="TreeGrafter"/>
</dbReference>
<dbReference type="GO" id="GO:0044550">
    <property type="term" value="P:secondary metabolite biosynthetic process"/>
    <property type="evidence" value="ECO:0007669"/>
    <property type="project" value="UniProtKB-ARBA"/>
</dbReference>
<dbReference type="CDD" id="cd02440">
    <property type="entry name" value="AdoMet_MTases"/>
    <property type="match status" value="1"/>
</dbReference>
<dbReference type="CDD" id="cd05195">
    <property type="entry name" value="enoyl_red"/>
    <property type="match status" value="1"/>
</dbReference>
<dbReference type="CDD" id="cd00833">
    <property type="entry name" value="PKS"/>
    <property type="match status" value="1"/>
</dbReference>
<dbReference type="Gene3D" id="3.40.47.10">
    <property type="match status" value="1"/>
</dbReference>
<dbReference type="Gene3D" id="3.40.366.10">
    <property type="entry name" value="Malonyl-Coenzyme A Acyl Carrier Protein, domain 2"/>
    <property type="match status" value="1"/>
</dbReference>
<dbReference type="Gene3D" id="3.90.180.10">
    <property type="entry name" value="Medium-chain alcohol dehydrogenases, catalytic domain"/>
    <property type="match status" value="1"/>
</dbReference>
<dbReference type="Gene3D" id="3.40.50.720">
    <property type="entry name" value="NAD(P)-binding Rossmann-like Domain"/>
    <property type="match status" value="3"/>
</dbReference>
<dbReference type="Gene3D" id="3.10.129.110">
    <property type="entry name" value="Polyketide synthase dehydratase"/>
    <property type="match status" value="1"/>
</dbReference>
<dbReference type="Gene3D" id="3.40.50.150">
    <property type="entry name" value="Vaccinia Virus protein VP39"/>
    <property type="match status" value="1"/>
</dbReference>
<dbReference type="InterPro" id="IPR001227">
    <property type="entry name" value="Ac_transferase_dom_sf"/>
</dbReference>
<dbReference type="InterPro" id="IPR014043">
    <property type="entry name" value="Acyl_transferase_dom"/>
</dbReference>
<dbReference type="InterPro" id="IPR016035">
    <property type="entry name" value="Acyl_Trfase/lysoPLipase"/>
</dbReference>
<dbReference type="InterPro" id="IPR013154">
    <property type="entry name" value="ADH-like_N"/>
</dbReference>
<dbReference type="InterPro" id="IPR011032">
    <property type="entry name" value="GroES-like_sf"/>
</dbReference>
<dbReference type="InterPro" id="IPR014031">
    <property type="entry name" value="Ketoacyl_synth_C"/>
</dbReference>
<dbReference type="InterPro" id="IPR014030">
    <property type="entry name" value="Ketoacyl_synth_N"/>
</dbReference>
<dbReference type="InterPro" id="IPR016036">
    <property type="entry name" value="Malonyl_transacylase_ACP-bd"/>
</dbReference>
<dbReference type="InterPro" id="IPR013217">
    <property type="entry name" value="Methyltransf_12"/>
</dbReference>
<dbReference type="InterPro" id="IPR036291">
    <property type="entry name" value="NAD(P)-bd_dom_sf"/>
</dbReference>
<dbReference type="InterPro" id="IPR032821">
    <property type="entry name" value="PKS_assoc"/>
</dbReference>
<dbReference type="InterPro" id="IPR020841">
    <property type="entry name" value="PKS_Beta-ketoAc_synthase_dom"/>
</dbReference>
<dbReference type="InterPro" id="IPR042104">
    <property type="entry name" value="PKS_dehydratase_sf"/>
</dbReference>
<dbReference type="InterPro" id="IPR020807">
    <property type="entry name" value="PKS_DH"/>
</dbReference>
<dbReference type="InterPro" id="IPR049551">
    <property type="entry name" value="PKS_DH_C"/>
</dbReference>
<dbReference type="InterPro" id="IPR049552">
    <property type="entry name" value="PKS_DH_N"/>
</dbReference>
<dbReference type="InterPro" id="IPR020843">
    <property type="entry name" value="PKS_ER"/>
</dbReference>
<dbReference type="InterPro" id="IPR013968">
    <property type="entry name" value="PKS_KR"/>
</dbReference>
<dbReference type="InterPro" id="IPR049900">
    <property type="entry name" value="PKS_mFAS_DH"/>
</dbReference>
<dbReference type="InterPro" id="IPR050091">
    <property type="entry name" value="PKS_NRPS_Biosynth_Enz"/>
</dbReference>
<dbReference type="InterPro" id="IPR029063">
    <property type="entry name" value="SAM-dependent_MTases_sf"/>
</dbReference>
<dbReference type="InterPro" id="IPR016039">
    <property type="entry name" value="Thiolase-like"/>
</dbReference>
<dbReference type="PANTHER" id="PTHR43775">
    <property type="entry name" value="FATTY ACID SYNTHASE"/>
    <property type="match status" value="1"/>
</dbReference>
<dbReference type="PANTHER" id="PTHR43775:SF50">
    <property type="entry name" value="HIGHLY REDUCING POLYKETIDE SYNTHASE SRDA"/>
    <property type="match status" value="1"/>
</dbReference>
<dbReference type="Pfam" id="PF00698">
    <property type="entry name" value="Acyl_transf_1"/>
    <property type="match status" value="1"/>
</dbReference>
<dbReference type="Pfam" id="PF08240">
    <property type="entry name" value="ADH_N"/>
    <property type="match status" value="1"/>
</dbReference>
<dbReference type="Pfam" id="PF22621">
    <property type="entry name" value="CurL-like_PKS_C"/>
    <property type="match status" value="1"/>
</dbReference>
<dbReference type="Pfam" id="PF16197">
    <property type="entry name" value="KAsynt_C_assoc"/>
    <property type="match status" value="1"/>
</dbReference>
<dbReference type="Pfam" id="PF00109">
    <property type="entry name" value="ketoacyl-synt"/>
    <property type="match status" value="1"/>
</dbReference>
<dbReference type="Pfam" id="PF02801">
    <property type="entry name" value="Ketoacyl-synt_C"/>
    <property type="match status" value="1"/>
</dbReference>
<dbReference type="Pfam" id="PF08659">
    <property type="entry name" value="KR"/>
    <property type="match status" value="1"/>
</dbReference>
<dbReference type="Pfam" id="PF08242">
    <property type="entry name" value="Methyltransf_12"/>
    <property type="match status" value="1"/>
</dbReference>
<dbReference type="Pfam" id="PF21089">
    <property type="entry name" value="PKS_DH_N"/>
    <property type="match status" value="1"/>
</dbReference>
<dbReference type="Pfam" id="PF14765">
    <property type="entry name" value="PS-DH"/>
    <property type="match status" value="1"/>
</dbReference>
<dbReference type="SMART" id="SM00827">
    <property type="entry name" value="PKS_AT"/>
    <property type="match status" value="1"/>
</dbReference>
<dbReference type="SMART" id="SM00826">
    <property type="entry name" value="PKS_DH"/>
    <property type="match status" value="1"/>
</dbReference>
<dbReference type="SMART" id="SM00829">
    <property type="entry name" value="PKS_ER"/>
    <property type="match status" value="1"/>
</dbReference>
<dbReference type="SMART" id="SM00825">
    <property type="entry name" value="PKS_KS"/>
    <property type="match status" value="1"/>
</dbReference>
<dbReference type="SUPFAM" id="SSF52151">
    <property type="entry name" value="FabD/lysophospholipase-like"/>
    <property type="match status" value="1"/>
</dbReference>
<dbReference type="SUPFAM" id="SSF50129">
    <property type="entry name" value="GroES-like"/>
    <property type="match status" value="1"/>
</dbReference>
<dbReference type="SUPFAM" id="SSF51735">
    <property type="entry name" value="NAD(P)-binding Rossmann-fold domains"/>
    <property type="match status" value="2"/>
</dbReference>
<dbReference type="SUPFAM" id="SSF55048">
    <property type="entry name" value="Probable ACP-binding domain of malonyl-CoA ACP transacylase"/>
    <property type="match status" value="1"/>
</dbReference>
<dbReference type="SUPFAM" id="SSF53335">
    <property type="entry name" value="S-adenosyl-L-methionine-dependent methyltransferases"/>
    <property type="match status" value="1"/>
</dbReference>
<dbReference type="SUPFAM" id="SSF53901">
    <property type="entry name" value="Thiolase-like"/>
    <property type="match status" value="1"/>
</dbReference>
<dbReference type="PROSITE" id="PS52004">
    <property type="entry name" value="KS3_2"/>
    <property type="match status" value="1"/>
</dbReference>
<dbReference type="PROSITE" id="PS52019">
    <property type="entry name" value="PKS_MFAS_DH"/>
    <property type="match status" value="1"/>
</dbReference>
<protein>
    <recommendedName>
        <fullName evidence="5">Polyketide synthase-like protein Preu9</fullName>
    </recommendedName>
</protein>
<comment type="function">
    <text evidence="6">Polyketide synthase-like protein that lacks important domains such as carrier domain and does probably not function as a polyketide synthase.</text>
</comment>
<comment type="domain">
    <text evidence="6">Multidomain protein; including a ketosynthase (KS) that catalyzes repeated decarboxylative condensation to elongate the polyketide backbone; a malonyl-CoA:ACP transacylase (MAT) that selects and transfers the extender unit malonyl-CoA; a dehydratase (DH) domain that reduces hydroxyl groups to enoyl groups; a methyltransferase (CMeT) domain responsible for the incorporation of methyl groups; and an enoylreductase (ER) domain that reduces enoyl groups to alkyl group. and an acyl-carrier protein (ACP) that serves as the tether of the growing and completed polyketide via its phosphopantetheinyl arm.</text>
</comment>
<comment type="domain">
    <text evidence="6">Lacks an acyl-carrier protein (ACP) that serves as the tether of the growing and completed polyketide via its phosphopantetheinyl arm.</text>
</comment>
<evidence type="ECO:0000255" key="1"/>
<evidence type="ECO:0000255" key="2">
    <source>
        <dbReference type="PROSITE-ProRule" id="PRU01348"/>
    </source>
</evidence>
<evidence type="ECO:0000255" key="3">
    <source>
        <dbReference type="PROSITE-ProRule" id="PRU01363"/>
    </source>
</evidence>
<evidence type="ECO:0000256" key="4">
    <source>
        <dbReference type="SAM" id="MobiDB-lite"/>
    </source>
</evidence>
<evidence type="ECO:0000303" key="5">
    <source>
    </source>
</evidence>
<evidence type="ECO:0000305" key="6">
    <source>
    </source>
</evidence>
<organism>
    <name type="scientific">Preussia isomera</name>
    <name type="common">Coprophilous fungus</name>
    <name type="synonym">Honoratia pisana</name>
    <dbReference type="NCBI Taxonomy" id="325670"/>
    <lineage>
        <taxon>Eukaryota</taxon>
        <taxon>Fungi</taxon>
        <taxon>Dikarya</taxon>
        <taxon>Ascomycota</taxon>
        <taxon>Pezizomycotina</taxon>
        <taxon>Dothideomycetes</taxon>
        <taxon>Pleosporomycetidae</taxon>
        <taxon>Pleosporales</taxon>
        <taxon>Sporormiaceae</taxon>
        <taxon>Preussia/Sporomiella species complex</taxon>
        <taxon>Preussia</taxon>
    </lineage>
</organism>
<sequence>MYALHLAVNAIRAGDCESAIVASANWIGDPGVQIALDKLGALSASARCHTFDLRAEGYARGEGFGAIYLKKTSLAISSGSPIRAMIRGTAMNSNGRTGGITRPSASGQEAVIREAYRNAGRLSFKDTGYFECHGTGTYVGDPIEVAAVGRVFASDRNDSAPLLVGSVKSNVGHSEGASALAAVMKVVLALENGAIPPIYDLQTRNPNIDFEGARVLPVTEVTEWPKDRLRRASINSFGYGGANAHCIIDHVNNVLADYEAPGVYRSIDDSSRNGVQNGHLNEFAANGTTNAPSRDHRNGITDGRADGNTNGHPNANGDVGGNPINGQANGDALMIHHPPMVRIPKKMRNAITRRLVLLPLSAHNETSLDRNWAEISQVLPTFPLFDIAYTLGARRSRYPQRTFTVVNSHTPVQTQSLVLDRKPTRAPLQTATIGFVFTGQGAQWHAMGADLWDYAVFRAVIQYQDNVLACLQNAPTWSLESVLRGDCEAGLVQTAAVSQAACTAVQVGLVDLLASWSIRPAGVVGHSSGEIAAAYASGRISAAEAIVAAYLRGQAVSLNGREGAMLAVGLGPEQVAEYVQEREAEVKVAAINSPGSVTLSGDVSAIDQLAATLTAEGIFNRKLHTGGNAYHSHHMMAIGNAYMAMLRDADGHMHAHRGDRYPHVSWVSSVTPTKSTPTSSTDGTDVVDLGPYWRSNLESRVRFAEAISRLVESIPVSVLVEIGPHPALKSPVEQILKSVGKTAGYVGTLKRNEDGQQSLLQLAGTLFTLNAVVDLAAVNAVDTADGSGSECGATCTSLPRYQYTYGGLNYHESRHSKEYRHRMELRHDLLGSKVVGTARLRPQWRNILRIKDVPWLGHHRLVPDAILPGAAYMAMAVEAVGHIYRGGVEAHVTVTGFELSDVTIDRSLVVPEDDYGVEVLTSLELTFDFFDVLTTATFSISSVGRDTGEWVQHCTGCVKLIIKSSNVDDISHTIQVPETLRPVDVRAWYTPTGRFQKVGLGYGPAFQPLTDVSSDGNHLAVASVALHTPSEHGAVKGGESDYPLHPAALDGAIQLGLIACHGGRPSEVTAAFVPVHLSRMYLSNDINDATAYGDAPTVVACGERRGIRSAHLDIDMRSPNGKVLLRVERLRCVSYSRISSDSTDRAFSSPFTRLVWRPDIRTISNAQARHRYPAPQGKQSSAWAVTNKLGHFVVQSIYETFGKLADGNRPHPSGDVGHFFAWIQKKGQHDQSPSMLEARKLACENRLLESIDELVKQAFHVLEVQIAKLLHDKMSDILFERRTGIDVIIGEGLLTPLYQSGLLMTGIYPQLHRIISGLAHADPNARILEIGGGTGGATRIAMNALNGPNGIKAYRDYTFTDISAGFLSGARELLGHLPDMKFSVFDIERDPVEQGYDEQTYNLIIACQVLHATSNMHRTLTNCRRLLKPGGRLVLLETNENFIVPGVVVGTFTGYWAGIPDGRVDAPFQSLDSWDRSLRAAGFSGLDVVLDDFPEPQNTTSVMLSTVPIHIPEKDVSGTLVHVLHSTPEVPRLVPKVVEGFEERGITATISSLGNGPVQLPPASHAVIFYDEQDLLANSSEKSLGVFQHLSENSATLLVLTSCGTVNGLNPDGALIPGLLRVLRNENPATEYGSIDIDATHFNVDSSEEQEIARRIVDCELDLRRSVLPEELESTPPDREFVWQKGCMWVSRHVPDAGFHSEHGLDNKSMKPELLPLSSQGAVRAVFESPGVPNSLCFASYEEMKEPLQPDYIDVEVAAIGLNSQDIDHWTGRVNANHLSSEYAGVVTAVGTNVYNLKVGDRVYGLGKGQFGNWTRGPSVLAQKLQPEDKMIQMASMPLAYTTATYVLEQIARLRKGQSVLIQSGAKDIGLAILNLAKTKEAVVFAIVETPEQVDFLTAKMGMPASRIISTIPTLAVLRRAAQGTCNGKFDVIVSTVSGEAQQSFPSMLSHLGHWIDMSQNEPQTLSTVNGRLLLHNASYCFVDPTAIFDTSPVLAAEIKQTVDKHYRKGLIGPIPRIEESDVSQIGSSLGNLANMIGKLVVSFENPESLVRMVPSPPSVRFDPKSFYVITGVLGGLGQSLVQWMASRGARHLALLSRRHVSSVPEAEKFITSLSNRGINVSCLVCDVSDAAQVNKVIKDLSSH</sequence>